<keyword id="KW-0472">Membrane</keyword>
<keyword id="KW-0496">Mitochondrion</keyword>
<keyword id="KW-0999">Mitochondrion inner membrane</keyword>
<keyword id="KW-1185">Reference proteome</keyword>
<keyword id="KW-0812">Transmembrane</keyword>
<keyword id="KW-1133">Transmembrane helix</keyword>
<protein>
    <recommendedName>
        <fullName>Surfeit locus protein 1</fullName>
        <shortName>Surfeit 1</shortName>
    </recommendedName>
    <alternativeName>
        <fullName>Cytochrome c oxidase assembly protein SURF1</fullName>
    </alternativeName>
    <alternativeName>
        <fullName>Protein EMBRYO DEFECTIVE 3121</fullName>
    </alternativeName>
    <alternativeName>
        <fullName>Surfeit locus 1 cytochrome c oxidase biogenesis protein</fullName>
    </alternativeName>
</protein>
<name>SURF1_ARATH</name>
<proteinExistence type="evidence at transcript level"/>
<dbReference type="EMBL" id="AF182953">
    <property type="protein sequence ID" value="AAF19609.1"/>
    <property type="molecule type" value="mRNA"/>
</dbReference>
<dbReference type="EMBL" id="AB019230">
    <property type="protein sequence ID" value="BAB02714.1"/>
    <property type="status" value="ALT_SEQ"/>
    <property type="molecule type" value="Genomic_DNA"/>
</dbReference>
<dbReference type="EMBL" id="CP002686">
    <property type="protein sequence ID" value="AEE76023.1"/>
    <property type="molecule type" value="Genomic_DNA"/>
</dbReference>
<dbReference type="EMBL" id="BT024740">
    <property type="protein sequence ID" value="ABD59078.1"/>
    <property type="molecule type" value="mRNA"/>
</dbReference>
<dbReference type="RefSeq" id="NP_566592.1">
    <property type="nucleotide sequence ID" value="NM_112672.3"/>
</dbReference>
<dbReference type="SMR" id="Q9SE51"/>
<dbReference type="FunCoup" id="Q9SE51">
    <property type="interactions" value="3081"/>
</dbReference>
<dbReference type="STRING" id="3702.Q9SE51"/>
<dbReference type="PaxDb" id="3702-AT3G17910.1"/>
<dbReference type="ProteomicsDB" id="228287"/>
<dbReference type="EnsemblPlants" id="AT3G17910.1">
    <property type="protein sequence ID" value="AT3G17910.1"/>
    <property type="gene ID" value="AT3G17910"/>
</dbReference>
<dbReference type="GeneID" id="821310"/>
<dbReference type="Gramene" id="AT3G17910.1">
    <property type="protein sequence ID" value="AT3G17910.1"/>
    <property type="gene ID" value="AT3G17910"/>
</dbReference>
<dbReference type="KEGG" id="ath:AT3G17910"/>
<dbReference type="Araport" id="AT3G17910"/>
<dbReference type="TAIR" id="AT3G17910"/>
<dbReference type="eggNOG" id="KOG1563">
    <property type="taxonomic scope" value="Eukaryota"/>
</dbReference>
<dbReference type="HOGENOM" id="CLU_047737_4_2_1"/>
<dbReference type="InParanoid" id="Q9SE51"/>
<dbReference type="OMA" id="WYSRDVA"/>
<dbReference type="OrthoDB" id="10040024at2759"/>
<dbReference type="PhylomeDB" id="Q9SE51"/>
<dbReference type="PRO" id="PR:Q9SE51"/>
<dbReference type="Proteomes" id="UP000006548">
    <property type="component" value="Chromosome 3"/>
</dbReference>
<dbReference type="ExpressionAtlas" id="Q9SE51">
    <property type="expression patterns" value="baseline and differential"/>
</dbReference>
<dbReference type="GO" id="GO:0005743">
    <property type="term" value="C:mitochondrial inner membrane"/>
    <property type="evidence" value="ECO:0007669"/>
    <property type="project" value="UniProtKB-SubCell"/>
</dbReference>
<dbReference type="GO" id="GO:0005739">
    <property type="term" value="C:mitochondrion"/>
    <property type="evidence" value="ECO:0000314"/>
    <property type="project" value="TAIR"/>
</dbReference>
<dbReference type="GO" id="GO:0009793">
    <property type="term" value="P:embryo development ending in seed dormancy"/>
    <property type="evidence" value="ECO:0000315"/>
    <property type="project" value="TAIR"/>
</dbReference>
<dbReference type="CDD" id="cd06662">
    <property type="entry name" value="SURF1"/>
    <property type="match status" value="1"/>
</dbReference>
<dbReference type="InterPro" id="IPR002994">
    <property type="entry name" value="Surf1/Shy1"/>
</dbReference>
<dbReference type="InterPro" id="IPR045214">
    <property type="entry name" value="Surf1/Surf4"/>
</dbReference>
<dbReference type="PANTHER" id="PTHR23427">
    <property type="entry name" value="SURFEIT LOCUS PROTEIN"/>
    <property type="match status" value="1"/>
</dbReference>
<dbReference type="PANTHER" id="PTHR23427:SF2">
    <property type="entry name" value="SURFEIT LOCUS PROTEIN 1"/>
    <property type="match status" value="1"/>
</dbReference>
<dbReference type="Pfam" id="PF02104">
    <property type="entry name" value="SURF1"/>
    <property type="match status" value="1"/>
</dbReference>
<dbReference type="PROSITE" id="PS50895">
    <property type="entry name" value="SURF1"/>
    <property type="match status" value="1"/>
</dbReference>
<comment type="function">
    <text evidence="1">Probably involved in the biogenesis of the COX complex.</text>
</comment>
<comment type="subcellular location">
    <subcellularLocation>
        <location evidence="1">Mitochondrion inner membrane</location>
        <topology evidence="1">Multi-pass membrane protein</topology>
    </subcellularLocation>
</comment>
<comment type="similarity">
    <text evidence="3">Belongs to the SURF1 (TC 3.D.4.8) family.</text>
</comment>
<comment type="sequence caution" evidence="3">
    <conflict type="erroneous gene model prediction">
        <sequence resource="EMBL-CDS" id="BAB02714"/>
    </conflict>
</comment>
<evidence type="ECO:0000250" key="1"/>
<evidence type="ECO:0000255" key="2"/>
<evidence type="ECO:0000305" key="3"/>
<feature type="chain" id="PRO_0000412564" description="Surfeit locus protein 1">
    <location>
        <begin position="1"/>
        <end position="354"/>
    </location>
</feature>
<feature type="transmembrane region" description="Helical" evidence="2">
    <location>
        <begin position="76"/>
        <end position="92"/>
    </location>
</feature>
<feature type="transmembrane region" description="Helical" evidence="2">
    <location>
        <begin position="328"/>
        <end position="344"/>
    </location>
</feature>
<accession>Q9SE51</accession>
<accession>Q9LVH9</accession>
<reference key="1">
    <citation type="journal article" date="1999" name="FEBS Lett.">
        <title>Sequence conservation from human to prokaryotes of Surf1, a protein involved in cytochrome c oxidase assembly, deficient in Leigh syndrome.</title>
        <authorList>
            <person name="Poyau A."/>
            <person name="Buchet K."/>
            <person name="Godinot C."/>
        </authorList>
    </citation>
    <scope>NUCLEOTIDE SEQUENCE [MRNA]</scope>
    <source>
        <tissue>Leaf</tissue>
    </source>
</reference>
<reference key="2">
    <citation type="journal article" date="2000" name="DNA Res.">
        <title>Structural analysis of Arabidopsis thaliana chromosome 3. I. Sequence features of the regions of 4,504,864 bp covered by sixty P1 and TAC clones.</title>
        <authorList>
            <person name="Sato S."/>
            <person name="Nakamura Y."/>
            <person name="Kaneko T."/>
            <person name="Katoh T."/>
            <person name="Asamizu E."/>
            <person name="Tabata S."/>
        </authorList>
    </citation>
    <scope>NUCLEOTIDE SEQUENCE [LARGE SCALE GENOMIC DNA]</scope>
    <source>
        <strain>cv. Columbia</strain>
    </source>
</reference>
<reference key="3">
    <citation type="journal article" date="2017" name="Plant J.">
        <title>Araport11: a complete reannotation of the Arabidopsis thaliana reference genome.</title>
        <authorList>
            <person name="Cheng C.Y."/>
            <person name="Krishnakumar V."/>
            <person name="Chan A.P."/>
            <person name="Thibaud-Nissen F."/>
            <person name="Schobel S."/>
            <person name="Town C.D."/>
        </authorList>
    </citation>
    <scope>GENOME REANNOTATION</scope>
    <source>
        <strain>cv. Columbia</strain>
    </source>
</reference>
<reference key="4">
    <citation type="submission" date="2006-03" db="EMBL/GenBank/DDBJ databases">
        <title>Arabidopsis ORF clones.</title>
        <authorList>
            <person name="Shinn P."/>
            <person name="Chen H."/>
            <person name="Kim C.J."/>
            <person name="Ecker J.R."/>
        </authorList>
    </citation>
    <scope>NUCLEOTIDE SEQUENCE [LARGE SCALE MRNA]</scope>
    <source>
        <strain>cv. Columbia</strain>
    </source>
</reference>
<gene>
    <name type="primary">SURF1</name>
    <name type="synonym">EMB3121</name>
    <name type="ordered locus">At3g17910</name>
    <name type="ORF">MEB5.13</name>
</gene>
<organism>
    <name type="scientific">Arabidopsis thaliana</name>
    <name type="common">Mouse-ear cress</name>
    <dbReference type="NCBI Taxonomy" id="3702"/>
    <lineage>
        <taxon>Eukaryota</taxon>
        <taxon>Viridiplantae</taxon>
        <taxon>Streptophyta</taxon>
        <taxon>Embryophyta</taxon>
        <taxon>Tracheophyta</taxon>
        <taxon>Spermatophyta</taxon>
        <taxon>Magnoliopsida</taxon>
        <taxon>eudicotyledons</taxon>
        <taxon>Gunneridae</taxon>
        <taxon>Pentapetalae</taxon>
        <taxon>rosids</taxon>
        <taxon>malvids</taxon>
        <taxon>Brassicales</taxon>
        <taxon>Brassicaceae</taxon>
        <taxon>Camelineae</taxon>
        <taxon>Arabidopsis</taxon>
    </lineage>
</organism>
<sequence>MATSLSKILTRSNTKRYWCSTTTSISASPSLPKQFWSRHFSAVADSSSSSSAALGSQSSSSAPPQENKRGSKWSQLLLFLPGAITFGLGSWQIVRREEKFKTLEYQQQRLNMEPIKLNIDHPLDKNLNALEFRRVSCKGVFDEQRSIYLGPRSRSISGITENGFFVITPLMPIPGDLDSMQSPILVNRGWVPRSWREKSQESAEAEFIANQSTKAKSPSNEPKSWWKFWSKTPVITKEHISAVKPVEVVGVIRGGENPSIFVPSNDPSTGQWFYVDVPAMARAVGLPENTIYVEDVHEHVDRSRPYPVPKDINTLIRSKVMPQDHLNYSITWYSLSAAVTFMAYKRLKAKPVRR</sequence>